<reference key="1">
    <citation type="journal article" date="1994" name="EMBO J.">
        <title>Complete DNA sequence of yeast chromosome II.</title>
        <authorList>
            <person name="Feldmann H."/>
            <person name="Aigle M."/>
            <person name="Aljinovic G."/>
            <person name="Andre B."/>
            <person name="Baclet M.C."/>
            <person name="Barthe C."/>
            <person name="Baur A."/>
            <person name="Becam A.-M."/>
            <person name="Biteau N."/>
            <person name="Boles E."/>
            <person name="Brandt T."/>
            <person name="Brendel M."/>
            <person name="Brueckner M."/>
            <person name="Bussereau F."/>
            <person name="Christiansen C."/>
            <person name="Contreras R."/>
            <person name="Crouzet M."/>
            <person name="Cziepluch C."/>
            <person name="Demolis N."/>
            <person name="Delaveau T."/>
            <person name="Doignon F."/>
            <person name="Domdey H."/>
            <person name="Duesterhus S."/>
            <person name="Dubois E."/>
            <person name="Dujon B."/>
            <person name="El Bakkoury M."/>
            <person name="Entian K.-D."/>
            <person name="Feuermann M."/>
            <person name="Fiers W."/>
            <person name="Fobo G.M."/>
            <person name="Fritz C."/>
            <person name="Gassenhuber J."/>
            <person name="Glansdorff N."/>
            <person name="Goffeau A."/>
            <person name="Grivell L.A."/>
            <person name="de Haan M."/>
            <person name="Hein C."/>
            <person name="Herbert C.J."/>
            <person name="Hollenberg C.P."/>
            <person name="Holmstroem K."/>
            <person name="Jacq C."/>
            <person name="Jacquet M."/>
            <person name="Jauniaux J.-C."/>
            <person name="Jonniaux J.-L."/>
            <person name="Kallesoee T."/>
            <person name="Kiesau P."/>
            <person name="Kirchrath L."/>
            <person name="Koetter P."/>
            <person name="Korol S."/>
            <person name="Liebl S."/>
            <person name="Logghe M."/>
            <person name="Lohan A.J.E."/>
            <person name="Louis E.J."/>
            <person name="Li Z.Y."/>
            <person name="Maat M.J."/>
            <person name="Mallet L."/>
            <person name="Mannhaupt G."/>
            <person name="Messenguy F."/>
            <person name="Miosga T."/>
            <person name="Molemans F."/>
            <person name="Mueller S."/>
            <person name="Nasr F."/>
            <person name="Obermaier B."/>
            <person name="Perea J."/>
            <person name="Pierard A."/>
            <person name="Piravandi E."/>
            <person name="Pohl F.M."/>
            <person name="Pohl T.M."/>
            <person name="Potier S."/>
            <person name="Proft M."/>
            <person name="Purnelle B."/>
            <person name="Ramezani Rad M."/>
            <person name="Rieger M."/>
            <person name="Rose M."/>
            <person name="Schaaff-Gerstenschlaeger I."/>
            <person name="Scherens B."/>
            <person name="Schwarzlose C."/>
            <person name="Skala J."/>
            <person name="Slonimski P.P."/>
            <person name="Smits P.H.M."/>
            <person name="Souciet J.-L."/>
            <person name="Steensma H.Y."/>
            <person name="Stucka R."/>
            <person name="Urrestarazu L.A."/>
            <person name="van der Aart Q.J.M."/>
            <person name="Van Dyck L."/>
            <person name="Vassarotti A."/>
            <person name="Vetter I."/>
            <person name="Vierendeels F."/>
            <person name="Vissers S."/>
            <person name="Wagner G."/>
            <person name="de Wergifosse P."/>
            <person name="Wolfe K.H."/>
            <person name="Zagulski M."/>
            <person name="Zimmermann F.K."/>
            <person name="Mewes H.-W."/>
            <person name="Kleine K."/>
        </authorList>
    </citation>
    <scope>NUCLEOTIDE SEQUENCE [LARGE SCALE GENOMIC DNA]</scope>
    <source>
        <strain>ATCC 204508 / S288c</strain>
    </source>
</reference>
<reference key="2">
    <citation type="journal article" date="2014" name="G3 (Bethesda)">
        <title>The reference genome sequence of Saccharomyces cerevisiae: Then and now.</title>
        <authorList>
            <person name="Engel S.R."/>
            <person name="Dietrich F.S."/>
            <person name="Fisk D.G."/>
            <person name="Binkley G."/>
            <person name="Balakrishnan R."/>
            <person name="Costanzo M.C."/>
            <person name="Dwight S.S."/>
            <person name="Hitz B.C."/>
            <person name="Karra K."/>
            <person name="Nash R.S."/>
            <person name="Weng S."/>
            <person name="Wong E.D."/>
            <person name="Lloyd P."/>
            <person name="Skrzypek M.S."/>
            <person name="Miyasato S.R."/>
            <person name="Simison M."/>
            <person name="Cherry J.M."/>
        </authorList>
    </citation>
    <scope>GENOME REANNOTATION</scope>
    <source>
        <strain>ATCC 204508 / S288c</strain>
    </source>
</reference>
<reference key="3">
    <citation type="journal article" date="2003" name="Nature">
        <title>Sequencing and comparison of yeast species to identify genes and regulatory elements.</title>
        <authorList>
            <person name="Kellis M."/>
            <person name="Patterson N."/>
            <person name="Endrizzi M."/>
            <person name="Birren B.W."/>
            <person name="Lander E.S."/>
        </authorList>
    </citation>
    <scope>SEQUENCE REVISION TO 120 AND 123</scope>
</reference>
<reference key="4">
    <citation type="journal article" date="2003" name="Nature">
        <title>Global analysis of protein localization in budding yeast.</title>
        <authorList>
            <person name="Huh W.-K."/>
            <person name="Falvo J.V."/>
            <person name="Gerke L.C."/>
            <person name="Carroll A.S."/>
            <person name="Howson R.W."/>
            <person name="Weissman J.S."/>
            <person name="O'Shea E.K."/>
        </authorList>
    </citation>
    <scope>SUBCELLULAR LOCATION [LARGE SCALE ANALYSIS]</scope>
</reference>
<reference key="5">
    <citation type="journal article" date="2003" name="Proc. Natl. Acad. Sci. U.S.A.">
        <title>The proteome of Saccharomyces cerevisiae mitochondria.</title>
        <authorList>
            <person name="Sickmann A."/>
            <person name="Reinders J."/>
            <person name="Wagner Y."/>
            <person name="Joppich C."/>
            <person name="Zahedi R.P."/>
            <person name="Meyer H.E."/>
            <person name="Schoenfisch B."/>
            <person name="Perschil I."/>
            <person name="Chacinska A."/>
            <person name="Guiard B."/>
            <person name="Rehling P."/>
            <person name="Pfanner N."/>
            <person name="Meisinger C."/>
        </authorList>
    </citation>
    <scope>SUBCELLULAR LOCATION [LARGE SCALE ANALYSIS]</scope>
    <source>
        <strain>ATCC 76625 / YPH499</strain>
    </source>
</reference>
<reference key="6">
    <citation type="journal article" date="2014" name="Cell Metab.">
        <title>SDHAF4 promotes mitochondrial succinate dehydrogenase activity and prevents neurodegeneration.</title>
        <authorList>
            <person name="Van Vranken J.G."/>
            <person name="Bricker D.K."/>
            <person name="Dephoure N."/>
            <person name="Gygi S.P."/>
            <person name="Cox J.E."/>
            <person name="Thummel C.S."/>
            <person name="Rutter J."/>
        </authorList>
    </citation>
    <scope>FUNCTION</scope>
    <scope>SUBCELLULAR LOCATION</scope>
    <scope>INTERACTION WITH SDH1</scope>
</reference>
<keyword id="KW-0143">Chaperone</keyword>
<keyword id="KW-0496">Mitochondrion</keyword>
<keyword id="KW-1185">Reference proteome</keyword>
<keyword id="KW-0809">Transit peptide</keyword>
<feature type="transit peptide" description="Mitochondrion" evidence="1">
    <location>
        <begin position="1"/>
        <end position="32"/>
    </location>
</feature>
<feature type="chain" id="PRO_0000041936" description="Succinate dehydrogenase assembly factor 4, mitochondrial">
    <location>
        <begin position="33"/>
        <end position="138"/>
    </location>
</feature>
<feature type="region of interest" description="Disordered" evidence="2">
    <location>
        <begin position="71"/>
        <end position="138"/>
    </location>
</feature>
<feature type="compositionally biased region" description="Polar residues" evidence="2">
    <location>
        <begin position="71"/>
        <end position="98"/>
    </location>
</feature>
<evidence type="ECO:0000255" key="1"/>
<evidence type="ECO:0000256" key="2">
    <source>
        <dbReference type="SAM" id="MobiDB-lite"/>
    </source>
</evidence>
<evidence type="ECO:0000269" key="3">
    <source>
    </source>
</evidence>
<evidence type="ECO:0000269" key="4">
    <source>
    </source>
</evidence>
<evidence type="ECO:0000269" key="5">
    <source>
    </source>
</evidence>
<evidence type="ECO:0000303" key="6">
    <source>
    </source>
</evidence>
<evidence type="ECO:0000303" key="7">
    <source>
    </source>
</evidence>
<evidence type="ECO:0000305" key="8"/>
<evidence type="ECO:0000312" key="9">
    <source>
        <dbReference type="SGD" id="S000000473"/>
    </source>
</evidence>
<name>SDHF4_YEAST</name>
<dbReference type="EMBL" id="Z36138">
    <property type="protein sequence ID" value="CAA85232.1"/>
    <property type="status" value="ALT_FRAME"/>
    <property type="molecule type" value="Genomic_DNA"/>
</dbReference>
<dbReference type="EMBL" id="BK006936">
    <property type="protein sequence ID" value="DAA07385.1"/>
    <property type="molecule type" value="Genomic_DNA"/>
</dbReference>
<dbReference type="PIR" id="S46150">
    <property type="entry name" value="S46150"/>
</dbReference>
<dbReference type="RefSeq" id="NP_009828.2">
    <property type="nucleotide sequence ID" value="NM_001178617.1"/>
</dbReference>
<dbReference type="SMR" id="P38345"/>
<dbReference type="BioGRID" id="32964">
    <property type="interactions" value="63"/>
</dbReference>
<dbReference type="DIP" id="DIP-4772N"/>
<dbReference type="FunCoup" id="P38345">
    <property type="interactions" value="131"/>
</dbReference>
<dbReference type="IntAct" id="P38345">
    <property type="interactions" value="2"/>
</dbReference>
<dbReference type="STRING" id="4932.YBR269C"/>
<dbReference type="iPTMnet" id="P38345"/>
<dbReference type="PaxDb" id="4932-YBR269C"/>
<dbReference type="PeptideAtlas" id="P38345"/>
<dbReference type="EnsemblFungi" id="YBR269C_mRNA">
    <property type="protein sequence ID" value="YBR269C"/>
    <property type="gene ID" value="YBR269C"/>
</dbReference>
<dbReference type="GeneID" id="852572"/>
<dbReference type="KEGG" id="sce:YBR269C"/>
<dbReference type="AGR" id="SGD:S000000473"/>
<dbReference type="SGD" id="S000000473">
    <property type="gene designation" value="SDH8"/>
</dbReference>
<dbReference type="VEuPathDB" id="FungiDB:YBR269C"/>
<dbReference type="eggNOG" id="ENOG502S6UN">
    <property type="taxonomic scope" value="Eukaryota"/>
</dbReference>
<dbReference type="HOGENOM" id="CLU_101052_1_0_1"/>
<dbReference type="InParanoid" id="P38345"/>
<dbReference type="OMA" id="GGDWSYN"/>
<dbReference type="OrthoDB" id="201362at2759"/>
<dbReference type="BioCyc" id="YEAST:G3O-29190-MONOMER"/>
<dbReference type="Reactome" id="R-SCE-9854311">
    <property type="pathway name" value="Maturation of TCA enzymes and regulation of TCA cycle"/>
</dbReference>
<dbReference type="BioGRID-ORCS" id="852572">
    <property type="hits" value="9 hits in 10 CRISPR screens"/>
</dbReference>
<dbReference type="PRO" id="PR:P38345"/>
<dbReference type="Proteomes" id="UP000002311">
    <property type="component" value="Chromosome II"/>
</dbReference>
<dbReference type="RNAct" id="P38345">
    <property type="molecule type" value="protein"/>
</dbReference>
<dbReference type="GO" id="GO:0005759">
    <property type="term" value="C:mitochondrial matrix"/>
    <property type="evidence" value="ECO:0000314"/>
    <property type="project" value="SGD"/>
</dbReference>
<dbReference type="GO" id="GO:0005739">
    <property type="term" value="C:mitochondrion"/>
    <property type="evidence" value="ECO:0007005"/>
    <property type="project" value="SGD"/>
</dbReference>
<dbReference type="GO" id="GO:0008047">
    <property type="term" value="F:enzyme activator activity"/>
    <property type="evidence" value="ECO:0000315"/>
    <property type="project" value="UniProtKB"/>
</dbReference>
<dbReference type="GO" id="GO:0044183">
    <property type="term" value="F:protein folding chaperone"/>
    <property type="evidence" value="ECO:0000315"/>
    <property type="project" value="SGD"/>
</dbReference>
<dbReference type="GO" id="GO:0045333">
    <property type="term" value="P:cellular respiration"/>
    <property type="evidence" value="ECO:0000316"/>
    <property type="project" value="UniProtKB"/>
</dbReference>
<dbReference type="GO" id="GO:0034614">
    <property type="term" value="P:cellular response to reactive oxygen species"/>
    <property type="evidence" value="ECO:0000315"/>
    <property type="project" value="UniProtKB"/>
</dbReference>
<dbReference type="GO" id="GO:0034553">
    <property type="term" value="P:mitochondrial respiratory chain complex II assembly"/>
    <property type="evidence" value="ECO:0000315"/>
    <property type="project" value="SGD"/>
</dbReference>
<dbReference type="GO" id="GO:1904231">
    <property type="term" value="P:positive regulation of succinate dehydrogenase activity"/>
    <property type="evidence" value="ECO:0000315"/>
    <property type="project" value="UniProtKB"/>
</dbReference>
<dbReference type="InterPro" id="IPR012875">
    <property type="entry name" value="SDHF4"/>
</dbReference>
<dbReference type="PANTHER" id="PTHR28524">
    <property type="entry name" value="SUCCINATE DEHYDROGENASE ASSEMBLY FACTOR 4, MITOCHONDRIAL"/>
    <property type="match status" value="1"/>
</dbReference>
<dbReference type="PANTHER" id="PTHR28524:SF3">
    <property type="entry name" value="SUCCINATE DEHYDROGENASE ASSEMBLY FACTOR 4, MITOCHONDRIAL"/>
    <property type="match status" value="1"/>
</dbReference>
<dbReference type="Pfam" id="PF07896">
    <property type="entry name" value="DUF1674"/>
    <property type="match status" value="1"/>
</dbReference>
<sequence>MLCAIKSTGYRYPRTGALNLLRGRPFNMATRKITTERIPGPPKLPREEQEEFERLQRIATSQEAIDQYNAQATGDRTKESLNSPLLTKNDIGSFSPEFSKTIPEFEGDVNPKTGEVGGPKQDPLRHGDYSFNGRVTDF</sequence>
<proteinExistence type="evidence at protein level"/>
<gene>
    <name evidence="7" type="primary">SDH8</name>
    <name evidence="6" type="synonym">FMP21</name>
    <name evidence="9" type="ordered locus">YBR269C</name>
    <name type="ORF">YBR1737</name>
</gene>
<comment type="function">
    <text evidence="5">Plays an essential role in the assembly of succinate dehydrogenase (SDH), an enzyme complex (also referred to as respiratory complex II) that is a component of both the tricarboxylic acid (TCA) cycle and the mitochondrial electron transport chain, and which couples the oxidation of succinate to fumarate with the reduction of ubiquinone (coenzyme Q) to ubiquinol. Binds to the flavoprotein subunit SDH1 in its FAD-bound form, blocking the generation of excess reactive oxygen species (ROS) and facilitating its assembly with the iron-sulfur protein subunit SDH2 into the SDH catalytic dimer.</text>
</comment>
<comment type="subunit">
    <text evidence="5">Interacts with SDH1 in its FAD-bound form.</text>
</comment>
<comment type="subcellular location">
    <subcellularLocation>
        <location evidence="3 4 5">Mitochondrion matrix</location>
    </subcellularLocation>
</comment>
<comment type="similarity">
    <text evidence="8">Belongs to the SDHAF4 family.</text>
</comment>
<comment type="sequence caution" evidence="8">
    <conflict type="frameshift">
        <sequence resource="EMBL-CDS" id="CAA85232"/>
    </conflict>
</comment>
<accession>P38345</accession>
<accession>D6VQR5</accession>
<organism>
    <name type="scientific">Saccharomyces cerevisiae (strain ATCC 204508 / S288c)</name>
    <name type="common">Baker's yeast</name>
    <dbReference type="NCBI Taxonomy" id="559292"/>
    <lineage>
        <taxon>Eukaryota</taxon>
        <taxon>Fungi</taxon>
        <taxon>Dikarya</taxon>
        <taxon>Ascomycota</taxon>
        <taxon>Saccharomycotina</taxon>
        <taxon>Saccharomycetes</taxon>
        <taxon>Saccharomycetales</taxon>
        <taxon>Saccharomycetaceae</taxon>
        <taxon>Saccharomyces</taxon>
    </lineage>
</organism>
<protein>
    <recommendedName>
        <fullName evidence="7">Succinate dehydrogenase assembly factor 4, mitochondrial</fullName>
        <shortName evidence="7">SDH assembly factor 4</shortName>
        <shortName evidence="7">SDHAF4</shortName>
    </recommendedName>
    <alternativeName>
        <fullName evidence="6">Found in mitochondrial proteome protein 21</fullName>
    </alternativeName>
</protein>